<reference key="1">
    <citation type="journal article" date="2004" name="Nucleic Acids Res.">
        <title>The genome sequence of Bacillus cereus ATCC 10987 reveals metabolic adaptations and a large plasmid related to Bacillus anthracis pXO1.</title>
        <authorList>
            <person name="Rasko D.A."/>
            <person name="Ravel J."/>
            <person name="Oekstad O.A."/>
            <person name="Helgason E."/>
            <person name="Cer R.Z."/>
            <person name="Jiang L."/>
            <person name="Shores K.A."/>
            <person name="Fouts D.E."/>
            <person name="Tourasse N.J."/>
            <person name="Angiuoli S.V."/>
            <person name="Kolonay J.F."/>
            <person name="Nelson W.C."/>
            <person name="Kolstoe A.-B."/>
            <person name="Fraser C.M."/>
            <person name="Read T.D."/>
        </authorList>
    </citation>
    <scope>NUCLEOTIDE SEQUENCE [LARGE SCALE GENOMIC DNA]</scope>
    <source>
        <strain>ATCC 10987 / NRS 248</strain>
    </source>
</reference>
<gene>
    <name evidence="1" type="primary">mdh</name>
    <name type="ordered locus">BCE_4723</name>
</gene>
<keyword id="KW-0520">NAD</keyword>
<keyword id="KW-0560">Oxidoreductase</keyword>
<keyword id="KW-0597">Phosphoprotein</keyword>
<keyword id="KW-0816">Tricarboxylic acid cycle</keyword>
<sequence>MTIKRKKVSVIGAGFTGATTAFLLAQKELADVVLVDIPQLENPTKGKALDMLEASPVQGFDANIIGTSDYADTADSDVVVITAGIARKPGMSRDDLVATNSKIMKSITRDIAKHSPNAIIVVLTNPVDAMTYSVFKEAGFPKERVIGQSGVLDTARFRTFIAQELNLSVKDITGFVLGGHGDDMVPLVRYSYAGGIPLETLIPKERLEAIVERTRKGGGEIVGLLGNGSAYYAPAASLVEMTEAILKDQRRVLPAIAYLEGEYGYSDLYLGVPVILGGNGIEKIIELELLADEKEALDRSVESVRNVMKVLV</sequence>
<dbReference type="EC" id="1.1.1.37" evidence="1"/>
<dbReference type="EMBL" id="AE017194">
    <property type="protein sequence ID" value="AAS43624.1"/>
    <property type="molecule type" value="Genomic_DNA"/>
</dbReference>
<dbReference type="SMR" id="Q72ZE5"/>
<dbReference type="KEGG" id="bca:BCE_4723"/>
<dbReference type="HOGENOM" id="CLU_045401_2_1_9"/>
<dbReference type="Proteomes" id="UP000002527">
    <property type="component" value="Chromosome"/>
</dbReference>
<dbReference type="GO" id="GO:0004459">
    <property type="term" value="F:L-lactate dehydrogenase activity"/>
    <property type="evidence" value="ECO:0007669"/>
    <property type="project" value="TreeGrafter"/>
</dbReference>
<dbReference type="GO" id="GO:0030060">
    <property type="term" value="F:L-malate dehydrogenase (NAD+) activity"/>
    <property type="evidence" value="ECO:0007669"/>
    <property type="project" value="UniProtKB-UniRule"/>
</dbReference>
<dbReference type="GO" id="GO:0006089">
    <property type="term" value="P:lactate metabolic process"/>
    <property type="evidence" value="ECO:0007669"/>
    <property type="project" value="TreeGrafter"/>
</dbReference>
<dbReference type="GO" id="GO:0006099">
    <property type="term" value="P:tricarboxylic acid cycle"/>
    <property type="evidence" value="ECO:0007669"/>
    <property type="project" value="UniProtKB-UniRule"/>
</dbReference>
<dbReference type="CDD" id="cd01339">
    <property type="entry name" value="LDH-like_MDH"/>
    <property type="match status" value="1"/>
</dbReference>
<dbReference type="FunFam" id="3.40.50.720:FF:000018">
    <property type="entry name" value="Malate dehydrogenase"/>
    <property type="match status" value="1"/>
</dbReference>
<dbReference type="FunFam" id="3.90.110.10:FF:000004">
    <property type="entry name" value="Malate dehydrogenase"/>
    <property type="match status" value="1"/>
</dbReference>
<dbReference type="Gene3D" id="3.90.110.10">
    <property type="entry name" value="Lactate dehydrogenase/glycoside hydrolase, family 4, C-terminal"/>
    <property type="match status" value="1"/>
</dbReference>
<dbReference type="Gene3D" id="3.40.50.720">
    <property type="entry name" value="NAD(P)-binding Rossmann-like Domain"/>
    <property type="match status" value="1"/>
</dbReference>
<dbReference type="HAMAP" id="MF_00487">
    <property type="entry name" value="Malate_dehydrog_3"/>
    <property type="match status" value="1"/>
</dbReference>
<dbReference type="InterPro" id="IPR001557">
    <property type="entry name" value="L-lactate/malate_DH"/>
</dbReference>
<dbReference type="InterPro" id="IPR022383">
    <property type="entry name" value="Lactate/malate_DH_C"/>
</dbReference>
<dbReference type="InterPro" id="IPR001236">
    <property type="entry name" value="Lactate/malate_DH_N"/>
</dbReference>
<dbReference type="InterPro" id="IPR015955">
    <property type="entry name" value="Lactate_DH/Glyco_Ohase_4_C"/>
</dbReference>
<dbReference type="InterPro" id="IPR011275">
    <property type="entry name" value="Malate_DH_type3"/>
</dbReference>
<dbReference type="InterPro" id="IPR036291">
    <property type="entry name" value="NAD(P)-bd_dom_sf"/>
</dbReference>
<dbReference type="NCBIfam" id="TIGR01763">
    <property type="entry name" value="MalateDH_bact"/>
    <property type="match status" value="1"/>
</dbReference>
<dbReference type="NCBIfam" id="NF004863">
    <property type="entry name" value="PRK06223.1"/>
    <property type="match status" value="1"/>
</dbReference>
<dbReference type="PANTHER" id="PTHR43128">
    <property type="entry name" value="L-2-HYDROXYCARBOXYLATE DEHYDROGENASE (NAD(P)(+))"/>
    <property type="match status" value="1"/>
</dbReference>
<dbReference type="PANTHER" id="PTHR43128:SF16">
    <property type="entry name" value="L-LACTATE DEHYDROGENASE"/>
    <property type="match status" value="1"/>
</dbReference>
<dbReference type="Pfam" id="PF02866">
    <property type="entry name" value="Ldh_1_C"/>
    <property type="match status" value="1"/>
</dbReference>
<dbReference type="Pfam" id="PF00056">
    <property type="entry name" value="Ldh_1_N"/>
    <property type="match status" value="1"/>
</dbReference>
<dbReference type="PIRSF" id="PIRSF000102">
    <property type="entry name" value="Lac_mal_DH"/>
    <property type="match status" value="1"/>
</dbReference>
<dbReference type="PRINTS" id="PR00086">
    <property type="entry name" value="LLDHDRGNASE"/>
</dbReference>
<dbReference type="SUPFAM" id="SSF56327">
    <property type="entry name" value="LDH C-terminal domain-like"/>
    <property type="match status" value="1"/>
</dbReference>
<dbReference type="SUPFAM" id="SSF51735">
    <property type="entry name" value="NAD(P)-binding Rossmann-fold domains"/>
    <property type="match status" value="1"/>
</dbReference>
<feature type="chain" id="PRO_0000113425" description="Malate dehydrogenase">
    <location>
        <begin position="1"/>
        <end position="312"/>
    </location>
</feature>
<feature type="active site" description="Proton acceptor" evidence="1">
    <location>
        <position position="180"/>
    </location>
</feature>
<feature type="binding site" evidence="1">
    <location>
        <begin position="12"/>
        <end position="17"/>
    </location>
    <ligand>
        <name>NAD(+)</name>
        <dbReference type="ChEBI" id="CHEBI:57540"/>
    </ligand>
</feature>
<feature type="binding site" evidence="1">
    <location>
        <position position="36"/>
    </location>
    <ligand>
        <name>NAD(+)</name>
        <dbReference type="ChEBI" id="CHEBI:57540"/>
    </ligand>
</feature>
<feature type="binding site" evidence="1">
    <location>
        <position position="87"/>
    </location>
    <ligand>
        <name>substrate</name>
    </ligand>
</feature>
<feature type="binding site" evidence="1">
    <location>
        <position position="93"/>
    </location>
    <ligand>
        <name>substrate</name>
    </ligand>
</feature>
<feature type="binding site" evidence="1">
    <location>
        <position position="100"/>
    </location>
    <ligand>
        <name>NAD(+)</name>
        <dbReference type="ChEBI" id="CHEBI:57540"/>
    </ligand>
</feature>
<feature type="binding site" evidence="1">
    <location>
        <begin position="123"/>
        <end position="125"/>
    </location>
    <ligand>
        <name>NAD(+)</name>
        <dbReference type="ChEBI" id="CHEBI:57540"/>
    </ligand>
</feature>
<feature type="binding site" evidence="1">
    <location>
        <position position="125"/>
    </location>
    <ligand>
        <name>substrate</name>
    </ligand>
</feature>
<feature type="binding site" evidence="1">
    <location>
        <position position="156"/>
    </location>
    <ligand>
        <name>substrate</name>
    </ligand>
</feature>
<feature type="modified residue" description="Phosphoserine" evidence="1">
    <location>
        <position position="149"/>
    </location>
</feature>
<proteinExistence type="inferred from homology"/>
<evidence type="ECO:0000255" key="1">
    <source>
        <dbReference type="HAMAP-Rule" id="MF_00487"/>
    </source>
</evidence>
<comment type="function">
    <text evidence="1">Catalyzes the reversible oxidation of malate to oxaloacetate.</text>
</comment>
<comment type="catalytic activity">
    <reaction evidence="1">
        <text>(S)-malate + NAD(+) = oxaloacetate + NADH + H(+)</text>
        <dbReference type="Rhea" id="RHEA:21432"/>
        <dbReference type="ChEBI" id="CHEBI:15378"/>
        <dbReference type="ChEBI" id="CHEBI:15589"/>
        <dbReference type="ChEBI" id="CHEBI:16452"/>
        <dbReference type="ChEBI" id="CHEBI:57540"/>
        <dbReference type="ChEBI" id="CHEBI:57945"/>
        <dbReference type="EC" id="1.1.1.37"/>
    </reaction>
</comment>
<comment type="similarity">
    <text evidence="1">Belongs to the LDH/MDH superfamily. MDH type 3 family.</text>
</comment>
<accession>Q72ZE5</accession>
<organism>
    <name type="scientific">Bacillus cereus (strain ATCC 10987 / NRS 248)</name>
    <dbReference type="NCBI Taxonomy" id="222523"/>
    <lineage>
        <taxon>Bacteria</taxon>
        <taxon>Bacillati</taxon>
        <taxon>Bacillota</taxon>
        <taxon>Bacilli</taxon>
        <taxon>Bacillales</taxon>
        <taxon>Bacillaceae</taxon>
        <taxon>Bacillus</taxon>
        <taxon>Bacillus cereus group</taxon>
    </lineage>
</organism>
<protein>
    <recommendedName>
        <fullName evidence="1">Malate dehydrogenase</fullName>
        <ecNumber evidence="1">1.1.1.37</ecNumber>
    </recommendedName>
</protein>
<name>MDH_BACC1</name>